<reference key="1">
    <citation type="journal article" date="2007" name="Nature">
        <title>The medaka draft genome and insights into vertebrate genome evolution.</title>
        <authorList>
            <person name="Kasahara M."/>
            <person name="Naruse K."/>
            <person name="Sasaki S."/>
            <person name="Nakatani Y."/>
            <person name="Qu W."/>
            <person name="Ahsan B."/>
            <person name="Yamada T."/>
            <person name="Nagayasu Y."/>
            <person name="Doi K."/>
            <person name="Kasai Y."/>
            <person name="Jindo T."/>
            <person name="Kobayashi D."/>
            <person name="Shimada A."/>
            <person name="Toyoda A."/>
            <person name="Kuroki Y."/>
            <person name="Fujiyama A."/>
            <person name="Sasaki T."/>
            <person name="Shimizu A."/>
            <person name="Asakawa S."/>
            <person name="Shimizu N."/>
            <person name="Hashimoto S."/>
            <person name="Yang J."/>
            <person name="Lee Y."/>
            <person name="Matsushima K."/>
            <person name="Sugano S."/>
            <person name="Sakaizumi M."/>
            <person name="Narita T."/>
            <person name="Ohishi K."/>
            <person name="Haga S."/>
            <person name="Ohta F."/>
            <person name="Nomoto H."/>
            <person name="Nogata K."/>
            <person name="Morishita T."/>
            <person name="Endo T."/>
            <person name="Shin-I T."/>
            <person name="Takeda H."/>
            <person name="Morishita S."/>
            <person name="Kohara Y."/>
        </authorList>
    </citation>
    <scope>NUCLEOTIDE SEQUENCE [LARGE SCALE GENOMIC DNA]</scope>
    <source>
        <strain>Hd-rR</strain>
    </source>
</reference>
<reference key="2">
    <citation type="journal article" date="2021" name="EMBO J.">
        <title>The TBC1D31/praja2 complex controls primary ciliogenesis through PKA-directed OFD1 ubiquitylation.</title>
        <authorList>
            <person name="Senatore E."/>
            <person name="Chiuso F."/>
            <person name="Rinaldi L."/>
            <person name="Intartaglia D."/>
            <person name="Delle Donne R."/>
            <person name="Pedone E."/>
            <person name="Catalanotti B."/>
            <person name="Pirone L."/>
            <person name="Fiorillo B."/>
            <person name="Moraca F."/>
            <person name="Giamundo G."/>
            <person name="Scala G."/>
            <person name="Raffeiner A."/>
            <person name="Torres-Quesada O."/>
            <person name="Stefan E."/>
            <person name="Kwiatkowski M."/>
            <person name="van Pijkeren A."/>
            <person name="Morleo M."/>
            <person name="Franco B."/>
            <person name="Garbi C."/>
            <person name="Conte I."/>
            <person name="Feliciello A."/>
        </authorList>
    </citation>
    <scope>FUNCTION</scope>
    <scope>DISRUPTION PHENOTYPE</scope>
</reference>
<accession>H2LP95</accession>
<evidence type="ECO:0000250" key="1">
    <source>
        <dbReference type="UniProtKB" id="Q96DN5"/>
    </source>
</evidence>
<evidence type="ECO:0000255" key="2"/>
<evidence type="ECO:0000255" key="3">
    <source>
        <dbReference type="PROSITE-ProRule" id="PRU00163"/>
    </source>
</evidence>
<evidence type="ECO:0000256" key="4">
    <source>
        <dbReference type="SAM" id="MobiDB-lite"/>
    </source>
</evidence>
<evidence type="ECO:0000269" key="5">
    <source>
    </source>
</evidence>
<evidence type="ECO:0000303" key="6">
    <source>
    </source>
</evidence>
<evidence type="ECO:0000305" key="7">
    <source>
    </source>
</evidence>
<sequence length="1067" mass="121938">MEVTDIGNKEEGKVWHRKPTPGKSVLASLVRTAQQGKVVRFLHVTFDTTGDCFLAGDHHGNIYLFDISRNRFRLVLKTGQACTALAFNLRRTTEFLVALADYSIRCFDKDTKQLVSWMRGHEGAVSSISVHSSGRYAITTSSDTAQLWDLDTFQRKRKLNIRQSVGIQKVFFLPLSNTILSCFSDDSIFAWECDTLFCKYQLPLPDSGPRISYKAFAVTLDGKSLASGGRSNLLHLWCLESRQLVRVIQMPSQVRTIRQLEFLPDSFDGGASQTLGVLSQDGMMRFINIHTCKLLFHIGSHDEAITAVAVNPSGRHIVAVMDNGRINIYSVQNLTQELNKPPPAQVAVVSGSEGVPDLPNLKMKVRSEVLPRPKRISGRRPQVKLLSLPAASSAEDKENELPAGLNKKRLVALLKAFGEYPAKYRMFVWRSLLCLPENHAAYSSLTDKGLHSAFLTLHEKYPIKSQKLQRALQRVLSALAHWAAIFGEVEYLPLVAFPFVKLFQNNAMLCFEVVATVIENWCQHWFEYFPNPPLNILSMVENVVAHHDKELLQHLVDCGITSQLYVWPLLETLFSEVLTRDEWLRLFDNIFSNHPSFLLMACAAYIICCREPLLHCSQRQDFEYFFHHRNNLDVGAMIKEAYRFMSSTPADLHPRTMLSDFTPLTSGQYPVFNKYPEFIVEYQSRERERIRLQEMEYLRERQQMSALRADFVRRRAEEEAFYAQQELLQKAEEQRKHVLEQEEEKLTQQRAKLAAMKRELKVKELQLLDATRRRFLKHQQELQASQIKKLDQEISRKMDLRDKETATAVQDLEIRQMELEVQRKRLEQRLLKEQQHVGHKVEEEVRIKMKEAEENLKEMLHGAETNMQALEESLAEVCRLDLESDWQREVVERLQKADAERERSRGGVEELQRQTGTEEQGLVNAMREEAHRKKDEAAAQIQESLQPRPSTHSDGQRLMGIHSAYAPPGFAHRHACSAGLKGESLTDRNKSASFKQAETNMVCLNSSSPPESTSTAFSFCRGRTQLDSGERELLKEIRELRQKLAARAKEGSSASSQTVCTPTPVSP</sequence>
<feature type="chain" id="PRO_0000457038" description="TBC1 domain family member 31">
    <location>
        <begin position="1"/>
        <end position="1067"/>
    </location>
</feature>
<feature type="repeat" description="WD 1" evidence="2">
    <location>
        <begin position="36"/>
        <end position="75"/>
    </location>
</feature>
<feature type="repeat" description="WD 2" evidence="2">
    <location>
        <begin position="76"/>
        <end position="119"/>
    </location>
</feature>
<feature type="repeat" description="WD 3" evidence="2">
    <location>
        <begin position="120"/>
        <end position="161"/>
    </location>
</feature>
<feature type="repeat" description="WD 3" evidence="2">
    <location>
        <begin position="162"/>
        <end position="201"/>
    </location>
</feature>
<feature type="repeat" description="WD 4" evidence="2">
    <location>
        <begin position="202"/>
        <end position="249"/>
    </location>
</feature>
<feature type="repeat" description="WD 4" evidence="2">
    <location>
        <begin position="250"/>
        <end position="288"/>
    </location>
</feature>
<feature type="domain" description="Rab-GAP TBC" evidence="3">
    <location>
        <begin position="419"/>
        <end position="594"/>
    </location>
</feature>
<feature type="region of interest" description="Disordered" evidence="4">
    <location>
        <begin position="896"/>
        <end position="955"/>
    </location>
</feature>
<feature type="region of interest" description="Disordered" evidence="4">
    <location>
        <begin position="1045"/>
        <end position="1067"/>
    </location>
</feature>
<feature type="coiled-coil region" evidence="2">
    <location>
        <begin position="724"/>
        <end position="773"/>
    </location>
</feature>
<feature type="compositionally biased region" description="Basic and acidic residues" evidence="4">
    <location>
        <begin position="896"/>
        <end position="912"/>
    </location>
</feature>
<feature type="compositionally biased region" description="Basic and acidic residues" evidence="4">
    <location>
        <begin position="926"/>
        <end position="937"/>
    </location>
</feature>
<feature type="compositionally biased region" description="Polar residues" evidence="4">
    <location>
        <begin position="941"/>
        <end position="953"/>
    </location>
</feature>
<feature type="compositionally biased region" description="Polar residues" evidence="4">
    <location>
        <begin position="1052"/>
        <end position="1067"/>
    </location>
</feature>
<organism>
    <name type="scientific">Oryzias latipes</name>
    <name type="common">Japanese rice fish</name>
    <name type="synonym">Japanese killifish</name>
    <dbReference type="NCBI Taxonomy" id="8090"/>
    <lineage>
        <taxon>Eukaryota</taxon>
        <taxon>Metazoa</taxon>
        <taxon>Chordata</taxon>
        <taxon>Craniata</taxon>
        <taxon>Vertebrata</taxon>
        <taxon>Euteleostomi</taxon>
        <taxon>Actinopterygii</taxon>
        <taxon>Neopterygii</taxon>
        <taxon>Teleostei</taxon>
        <taxon>Neoteleostei</taxon>
        <taxon>Acanthomorphata</taxon>
        <taxon>Ovalentaria</taxon>
        <taxon>Atherinomorphae</taxon>
        <taxon>Beloniformes</taxon>
        <taxon>Adrianichthyidae</taxon>
        <taxon>Oryziinae</taxon>
        <taxon>Oryzias</taxon>
    </lineage>
</organism>
<keyword id="KW-0966">Cell projection</keyword>
<keyword id="KW-0970">Cilium biogenesis/degradation</keyword>
<keyword id="KW-0175">Coiled coil</keyword>
<keyword id="KW-0963">Cytoplasm</keyword>
<keyword id="KW-0206">Cytoskeleton</keyword>
<keyword id="KW-1185">Reference proteome</keyword>
<keyword id="KW-0677">Repeat</keyword>
<keyword id="KW-0853">WD repeat</keyword>
<name>TBC31_ORYLA</name>
<protein>
    <recommendedName>
        <fullName evidence="7">TBC1 domain family member 31</fullName>
    </recommendedName>
</protein>
<dbReference type="RefSeq" id="XP_023820067.1">
    <property type="nucleotide sequence ID" value="XM_023964299.1"/>
</dbReference>
<dbReference type="SMR" id="H2LP95"/>
<dbReference type="FunCoup" id="H2LP95">
    <property type="interactions" value="611"/>
</dbReference>
<dbReference type="STRING" id="8090.ENSORLP00000007875"/>
<dbReference type="Ensembl" id="ENSORLT00000007876.2">
    <property type="protein sequence ID" value="ENSORLP00000007875.2"/>
    <property type="gene ID" value="ENSORLG00000006268.2"/>
</dbReference>
<dbReference type="GeneID" id="101172761"/>
<dbReference type="eggNOG" id="KOG0295">
    <property type="taxonomic scope" value="Eukaryota"/>
</dbReference>
<dbReference type="eggNOG" id="KOG1093">
    <property type="taxonomic scope" value="Eukaryota"/>
</dbReference>
<dbReference type="GeneTree" id="ENSGT00940000153859"/>
<dbReference type="HOGENOM" id="CLU_003330_0_0_1"/>
<dbReference type="InParanoid" id="H2LP95"/>
<dbReference type="OrthoDB" id="5578278at2759"/>
<dbReference type="TreeFam" id="TF324799"/>
<dbReference type="Proteomes" id="UP000001038">
    <property type="component" value="Chromosome 16"/>
</dbReference>
<dbReference type="Proteomes" id="UP000265180">
    <property type="component" value="Unplaced"/>
</dbReference>
<dbReference type="Proteomes" id="UP000265200">
    <property type="component" value="Unplaced"/>
</dbReference>
<dbReference type="Bgee" id="ENSORLG00000006268">
    <property type="expression patterns" value="Expressed in testis and 9 other cell types or tissues"/>
</dbReference>
<dbReference type="GO" id="GO:0034451">
    <property type="term" value="C:centriolar satellite"/>
    <property type="evidence" value="ECO:0000250"/>
    <property type="project" value="UniProtKB"/>
</dbReference>
<dbReference type="GO" id="GO:0005813">
    <property type="term" value="C:centrosome"/>
    <property type="evidence" value="ECO:0000250"/>
    <property type="project" value="UniProtKB"/>
</dbReference>
<dbReference type="GO" id="GO:0036064">
    <property type="term" value="C:ciliary basal body"/>
    <property type="evidence" value="ECO:0000250"/>
    <property type="project" value="UniProtKB"/>
</dbReference>
<dbReference type="GO" id="GO:0005737">
    <property type="term" value="C:cytoplasm"/>
    <property type="evidence" value="ECO:0007669"/>
    <property type="project" value="UniProtKB-KW"/>
</dbReference>
<dbReference type="GO" id="GO:0060090">
    <property type="term" value="F:molecular adaptor activity"/>
    <property type="evidence" value="ECO:0000315"/>
    <property type="project" value="UniProtKB"/>
</dbReference>
<dbReference type="GO" id="GO:0060271">
    <property type="term" value="P:cilium assembly"/>
    <property type="evidence" value="ECO:0000315"/>
    <property type="project" value="UniProtKB"/>
</dbReference>
<dbReference type="FunFam" id="2.130.10.10:FF:000722">
    <property type="entry name" value="TBC1 domain family member 31"/>
    <property type="match status" value="1"/>
</dbReference>
<dbReference type="FunFam" id="1.10.472.80:FF:000022">
    <property type="entry name" value="TBC1 domain family, member 31"/>
    <property type="match status" value="1"/>
</dbReference>
<dbReference type="FunFam" id="2.130.10.10:FF:001890">
    <property type="entry name" value="TBC1 domain family, member 31"/>
    <property type="match status" value="1"/>
</dbReference>
<dbReference type="Gene3D" id="1.10.472.80">
    <property type="entry name" value="Ypt/Rab-GAP domain of gyp1p, domain 3"/>
    <property type="match status" value="1"/>
</dbReference>
<dbReference type="Gene3D" id="2.130.10.10">
    <property type="entry name" value="YVTN repeat-like/Quinoprotein amine dehydrogenase"/>
    <property type="match status" value="2"/>
</dbReference>
<dbReference type="InterPro" id="IPR000195">
    <property type="entry name" value="Rab-GAP-TBC_dom"/>
</dbReference>
<dbReference type="InterPro" id="IPR035969">
    <property type="entry name" value="Rab-GAP_TBC_sf"/>
</dbReference>
<dbReference type="InterPro" id="IPR051570">
    <property type="entry name" value="TBC1_cilium_biogenesis"/>
</dbReference>
<dbReference type="InterPro" id="IPR015943">
    <property type="entry name" value="WD40/YVTN_repeat-like_dom_sf"/>
</dbReference>
<dbReference type="InterPro" id="IPR036322">
    <property type="entry name" value="WD40_repeat_dom_sf"/>
</dbReference>
<dbReference type="InterPro" id="IPR001680">
    <property type="entry name" value="WD40_rpt"/>
</dbReference>
<dbReference type="PANTHER" id="PTHR19853:SF1">
    <property type="entry name" value="TBC1 DOMAIN FAMILY MEMBER 31"/>
    <property type="match status" value="1"/>
</dbReference>
<dbReference type="PANTHER" id="PTHR19853">
    <property type="entry name" value="WD REPEAT CONTAINING PROTEIN 3 WDR3"/>
    <property type="match status" value="1"/>
</dbReference>
<dbReference type="Pfam" id="PF00566">
    <property type="entry name" value="RabGAP-TBC"/>
    <property type="match status" value="1"/>
</dbReference>
<dbReference type="Pfam" id="PF00400">
    <property type="entry name" value="WD40"/>
    <property type="match status" value="2"/>
</dbReference>
<dbReference type="SMART" id="SM00320">
    <property type="entry name" value="WD40"/>
    <property type="match status" value="7"/>
</dbReference>
<dbReference type="SUPFAM" id="SSF50978">
    <property type="entry name" value="WD40 repeat-like"/>
    <property type="match status" value="1"/>
</dbReference>
<dbReference type="SUPFAM" id="SSF47923">
    <property type="entry name" value="Ypt/Rab-GAP domain of gyp1p"/>
    <property type="match status" value="1"/>
</dbReference>
<dbReference type="PROSITE" id="PS50086">
    <property type="entry name" value="TBC_RABGAP"/>
    <property type="match status" value="1"/>
</dbReference>
<dbReference type="PROSITE" id="PS00678">
    <property type="entry name" value="WD_REPEATS_1"/>
    <property type="match status" value="1"/>
</dbReference>
<dbReference type="PROSITE" id="PS50082">
    <property type="entry name" value="WD_REPEATS_2"/>
    <property type="match status" value="1"/>
</dbReference>
<dbReference type="PROSITE" id="PS50294">
    <property type="entry name" value="WD_REPEATS_REGION"/>
    <property type="match status" value="1"/>
</dbReference>
<gene>
    <name evidence="6" type="primary">tbc1d31</name>
</gene>
<comment type="function">
    <text evidence="5">Molecular adapter which is involved in cilium biogenesis. Part of a functional complex including OFD1 a centriolar protein involved in cilium assembly. Could regulate the cAMP-dependent phosphorylation of OFD1, and its subsequent ubiquitination by PJA2 which ultimately leads to its proteasomal degradation.</text>
</comment>
<comment type="subcellular location">
    <subcellularLocation>
        <location evidence="1">Cytoplasm</location>
        <location evidence="1">Cytoskeleton</location>
        <location evidence="1">Microtubule organizing center</location>
        <location evidence="1">Centrosome</location>
    </subcellularLocation>
    <subcellularLocation>
        <location evidence="1">Cytoplasm</location>
        <location evidence="1">Cytoskeleton</location>
        <location evidence="1">Microtubule organizing center</location>
        <location evidence="1">Centrosome</location>
        <location evidence="1">Centriolar satellite</location>
    </subcellularLocation>
    <subcellularLocation>
        <location evidence="1">Cytoplasm</location>
        <location evidence="1">Cytoskeleton</location>
        <location evidence="1">Cilium basal body</location>
    </subcellularLocation>
</comment>
<comment type="disruption phenotype">
    <text evidence="5">Morpholino knockdown of the protein causes a delay in embryonic development and evident embryonic morphological abnormalities, resulting in a significant body shape alteration associated to microcephaly, microphthalmia, pigmentation defects and pericardial edema. A significant reduction in cilia length is observed.</text>
</comment>
<proteinExistence type="inferred from homology"/>